<keyword id="KW-0028">Amino-acid biosynthesis</keyword>
<keyword id="KW-0067">ATP-binding</keyword>
<keyword id="KW-0963">Cytoplasm</keyword>
<keyword id="KW-0328">Glycosyltransferase</keyword>
<keyword id="KW-0368">Histidine biosynthesis</keyword>
<keyword id="KW-0547">Nucleotide-binding</keyword>
<keyword id="KW-1185">Reference proteome</keyword>
<keyword id="KW-0808">Transferase</keyword>
<name>HIS12_GEOSL</name>
<feature type="chain" id="PRO_0000151908" description="ATP phosphoribosyltransferase 2">
    <location>
        <begin position="1"/>
        <end position="212"/>
    </location>
</feature>
<sequence>MTDYITIAIPKGRILEESVTLFGKIGINCDELLSNTRKLIFENHEQRMRYMIVRATDVPTYVEYGCADLGIVGKDTLMEQEKDLYEPLDLKFGYCRMMVAEPAGLALDDDPSSWTNIRIATKYPNVTEKYFARKGVQVEIIKLYGSIELAPLVGLSERIVDLVSTGETLRQNGLVEVETIAEITTRLIVNRASLKTKHPRITEIIEGLEKHV</sequence>
<organism>
    <name type="scientific">Geobacter sulfurreducens (strain ATCC 51573 / DSM 12127 / PCA)</name>
    <dbReference type="NCBI Taxonomy" id="243231"/>
    <lineage>
        <taxon>Bacteria</taxon>
        <taxon>Pseudomonadati</taxon>
        <taxon>Thermodesulfobacteriota</taxon>
        <taxon>Desulfuromonadia</taxon>
        <taxon>Geobacterales</taxon>
        <taxon>Geobacteraceae</taxon>
        <taxon>Geobacter</taxon>
    </lineage>
</organism>
<accession>P60836</accession>
<evidence type="ECO:0000250" key="1"/>
<evidence type="ECO:0000305" key="2"/>
<dbReference type="EC" id="2.4.2.17"/>
<dbReference type="EMBL" id="AE017180">
    <property type="protein sequence ID" value="AAR36492.1"/>
    <property type="molecule type" value="Genomic_DNA"/>
</dbReference>
<dbReference type="RefSeq" id="NP_954142.1">
    <property type="nucleotide sequence ID" value="NC_002939.5"/>
</dbReference>
<dbReference type="SMR" id="P60836"/>
<dbReference type="FunCoup" id="P60836">
    <property type="interactions" value="467"/>
</dbReference>
<dbReference type="STRING" id="243231.GSU3101"/>
<dbReference type="EnsemblBacteria" id="AAR36492">
    <property type="protein sequence ID" value="AAR36492"/>
    <property type="gene ID" value="GSU3101"/>
</dbReference>
<dbReference type="KEGG" id="gsu:GSU3101"/>
<dbReference type="PATRIC" id="fig|243231.5.peg.3125"/>
<dbReference type="eggNOG" id="COG0040">
    <property type="taxonomic scope" value="Bacteria"/>
</dbReference>
<dbReference type="HOGENOM" id="CLU_038115_2_0_7"/>
<dbReference type="InParanoid" id="P60836"/>
<dbReference type="OrthoDB" id="9801867at2"/>
<dbReference type="UniPathway" id="UPA00031">
    <property type="reaction ID" value="UER00006"/>
</dbReference>
<dbReference type="Proteomes" id="UP000000577">
    <property type="component" value="Chromosome"/>
</dbReference>
<dbReference type="GO" id="GO:0005737">
    <property type="term" value="C:cytoplasm"/>
    <property type="evidence" value="ECO:0007669"/>
    <property type="project" value="UniProtKB-SubCell"/>
</dbReference>
<dbReference type="GO" id="GO:0005524">
    <property type="term" value="F:ATP binding"/>
    <property type="evidence" value="ECO:0007669"/>
    <property type="project" value="UniProtKB-KW"/>
</dbReference>
<dbReference type="GO" id="GO:0003879">
    <property type="term" value="F:ATP phosphoribosyltransferase activity"/>
    <property type="evidence" value="ECO:0000318"/>
    <property type="project" value="GO_Central"/>
</dbReference>
<dbReference type="GO" id="GO:0000105">
    <property type="term" value="P:L-histidine biosynthetic process"/>
    <property type="evidence" value="ECO:0000318"/>
    <property type="project" value="GO_Central"/>
</dbReference>
<dbReference type="CDD" id="cd13595">
    <property type="entry name" value="PBP2_HisGs"/>
    <property type="match status" value="1"/>
</dbReference>
<dbReference type="FunFam" id="3.40.190.10:FF:000011">
    <property type="entry name" value="ATP phosphoribosyltransferase"/>
    <property type="match status" value="1"/>
</dbReference>
<dbReference type="Gene3D" id="3.40.190.10">
    <property type="entry name" value="Periplasmic binding protein-like II"/>
    <property type="match status" value="2"/>
</dbReference>
<dbReference type="HAMAP" id="MF_01018">
    <property type="entry name" value="HisG_Short"/>
    <property type="match status" value="1"/>
</dbReference>
<dbReference type="InterPro" id="IPR013820">
    <property type="entry name" value="ATP_PRibTrfase_cat"/>
</dbReference>
<dbReference type="InterPro" id="IPR018198">
    <property type="entry name" value="ATP_PRibTrfase_CS"/>
</dbReference>
<dbReference type="InterPro" id="IPR001348">
    <property type="entry name" value="ATP_PRibTrfase_HisG"/>
</dbReference>
<dbReference type="InterPro" id="IPR024893">
    <property type="entry name" value="ATP_PRibTrfase_HisG_short"/>
</dbReference>
<dbReference type="NCBIfam" id="TIGR00070">
    <property type="entry name" value="hisG"/>
    <property type="match status" value="1"/>
</dbReference>
<dbReference type="PANTHER" id="PTHR21403:SF8">
    <property type="entry name" value="ATP PHOSPHORIBOSYLTRANSFERASE"/>
    <property type="match status" value="1"/>
</dbReference>
<dbReference type="PANTHER" id="PTHR21403">
    <property type="entry name" value="ATP PHOSPHORIBOSYLTRANSFERASE ATP-PRTASE"/>
    <property type="match status" value="1"/>
</dbReference>
<dbReference type="Pfam" id="PF01634">
    <property type="entry name" value="HisG"/>
    <property type="match status" value="1"/>
</dbReference>
<dbReference type="SUPFAM" id="SSF53850">
    <property type="entry name" value="Periplasmic binding protein-like II"/>
    <property type="match status" value="1"/>
</dbReference>
<dbReference type="PROSITE" id="PS01316">
    <property type="entry name" value="ATP_P_PHORIBOSYLTR"/>
    <property type="match status" value="1"/>
</dbReference>
<proteinExistence type="inferred from homology"/>
<protein>
    <recommendedName>
        <fullName>ATP phosphoribosyltransferase 2</fullName>
        <shortName>ATP-PRT 2</shortName>
        <shortName>ATP-PRTase 2</shortName>
        <ecNumber>2.4.2.17</ecNumber>
    </recommendedName>
</protein>
<reference key="1">
    <citation type="journal article" date="2003" name="Science">
        <title>Genome of Geobacter sulfurreducens: metal reduction in subsurface environments.</title>
        <authorList>
            <person name="Methe B.A."/>
            <person name="Nelson K.E."/>
            <person name="Eisen J.A."/>
            <person name="Paulsen I.T."/>
            <person name="Nelson W.C."/>
            <person name="Heidelberg J.F."/>
            <person name="Wu D."/>
            <person name="Wu M."/>
            <person name="Ward N.L."/>
            <person name="Beanan M.J."/>
            <person name="Dodson R.J."/>
            <person name="Madupu R."/>
            <person name="Brinkac L.M."/>
            <person name="Daugherty S.C."/>
            <person name="DeBoy R.T."/>
            <person name="Durkin A.S."/>
            <person name="Gwinn M.L."/>
            <person name="Kolonay J.F."/>
            <person name="Sullivan S.A."/>
            <person name="Haft D.H."/>
            <person name="Selengut J."/>
            <person name="Davidsen T.M."/>
            <person name="Zafar N."/>
            <person name="White O."/>
            <person name="Tran B."/>
            <person name="Romero C."/>
            <person name="Forberger H.A."/>
            <person name="Weidman J.F."/>
            <person name="Khouri H.M."/>
            <person name="Feldblyum T.V."/>
            <person name="Utterback T.R."/>
            <person name="Van Aken S.E."/>
            <person name="Lovley D.R."/>
            <person name="Fraser C.M."/>
        </authorList>
    </citation>
    <scope>NUCLEOTIDE SEQUENCE [LARGE SCALE GENOMIC DNA]</scope>
    <source>
        <strain>ATCC 51573 / DSM 12127 / PCA</strain>
    </source>
</reference>
<gene>
    <name type="primary">hisG2</name>
    <name type="synonym">hisG-2</name>
    <name type="ordered locus">GSU3101</name>
</gene>
<comment type="function">
    <text evidence="1">Catalyzes the condensation of ATP and 5-phosphoribose 1-diphosphate to form N'-(5'-phosphoribosyl)-ATP (PR-ATP). Has a crucial role in the pathway because the rate of histidine biosynthesis seems to be controlled primarily by regulation of HisG enzymatic activity (By similarity).</text>
</comment>
<comment type="catalytic activity">
    <reaction>
        <text>1-(5-phospho-beta-D-ribosyl)-ATP + diphosphate = 5-phospho-alpha-D-ribose 1-diphosphate + ATP</text>
        <dbReference type="Rhea" id="RHEA:18473"/>
        <dbReference type="ChEBI" id="CHEBI:30616"/>
        <dbReference type="ChEBI" id="CHEBI:33019"/>
        <dbReference type="ChEBI" id="CHEBI:58017"/>
        <dbReference type="ChEBI" id="CHEBI:73183"/>
        <dbReference type="EC" id="2.4.2.17"/>
    </reaction>
</comment>
<comment type="pathway">
    <text>Amino-acid biosynthesis; L-histidine biosynthesis; L-histidine from 5-phospho-alpha-D-ribose 1-diphosphate: step 1/9.</text>
</comment>
<comment type="subunit">
    <text evidence="1">Heteromultimer composed of HisG and HisZ subunits.</text>
</comment>
<comment type="subcellular location">
    <subcellularLocation>
        <location evidence="1">Cytoplasm</location>
    </subcellularLocation>
</comment>
<comment type="domain">
    <text>Lacks the C-terminal regulatory region which is replaced by HisZ.</text>
</comment>
<comment type="similarity">
    <text evidence="2">Belongs to the ATP phosphoribosyltransferase family. Short subfamily.</text>
</comment>